<name>PYRE_YERPB</name>
<protein>
    <recommendedName>
        <fullName evidence="1">Orotate phosphoribosyltransferase</fullName>
        <shortName evidence="1">OPRT</shortName>
        <shortName evidence="1">OPRTase</shortName>
        <ecNumber evidence="1">2.4.2.10</ecNumber>
    </recommendedName>
</protein>
<proteinExistence type="inferred from homology"/>
<accession>B2JYM9</accession>
<reference key="1">
    <citation type="submission" date="2008-04" db="EMBL/GenBank/DDBJ databases">
        <title>Complete sequence of Yersinia pseudotuberculosis PB1/+.</title>
        <authorList>
            <person name="Copeland A."/>
            <person name="Lucas S."/>
            <person name="Lapidus A."/>
            <person name="Glavina del Rio T."/>
            <person name="Dalin E."/>
            <person name="Tice H."/>
            <person name="Bruce D."/>
            <person name="Goodwin L."/>
            <person name="Pitluck S."/>
            <person name="Munk A.C."/>
            <person name="Brettin T."/>
            <person name="Detter J.C."/>
            <person name="Han C."/>
            <person name="Tapia R."/>
            <person name="Schmutz J."/>
            <person name="Larimer F."/>
            <person name="Land M."/>
            <person name="Hauser L."/>
            <person name="Challacombe J.F."/>
            <person name="Green L."/>
            <person name="Lindler L.E."/>
            <person name="Nikolich M.P."/>
            <person name="Richardson P."/>
        </authorList>
    </citation>
    <scope>NUCLEOTIDE SEQUENCE [LARGE SCALE GENOMIC DNA]</scope>
    <source>
        <strain>PB1/+</strain>
    </source>
</reference>
<organism>
    <name type="scientific">Yersinia pseudotuberculosis serotype IB (strain PB1/+)</name>
    <dbReference type="NCBI Taxonomy" id="502801"/>
    <lineage>
        <taxon>Bacteria</taxon>
        <taxon>Pseudomonadati</taxon>
        <taxon>Pseudomonadota</taxon>
        <taxon>Gammaproteobacteria</taxon>
        <taxon>Enterobacterales</taxon>
        <taxon>Yersiniaceae</taxon>
        <taxon>Yersinia</taxon>
    </lineage>
</organism>
<feature type="chain" id="PRO_1000138844" description="Orotate phosphoribosyltransferase">
    <location>
        <begin position="1"/>
        <end position="215"/>
    </location>
</feature>
<feature type="binding site" description="in other chain" evidence="1">
    <location>
        <position position="26"/>
    </location>
    <ligand>
        <name>5-phospho-alpha-D-ribose 1-diphosphate</name>
        <dbReference type="ChEBI" id="CHEBI:58017"/>
        <note>ligand shared between dimeric partners</note>
    </ligand>
</feature>
<feature type="binding site" evidence="1">
    <location>
        <begin position="34"/>
        <end position="35"/>
    </location>
    <ligand>
        <name>orotate</name>
        <dbReference type="ChEBI" id="CHEBI:30839"/>
    </ligand>
</feature>
<feature type="binding site" description="in other chain" evidence="1">
    <location>
        <begin position="72"/>
        <end position="73"/>
    </location>
    <ligand>
        <name>5-phospho-alpha-D-ribose 1-diphosphate</name>
        <dbReference type="ChEBI" id="CHEBI:58017"/>
        <note>ligand shared between dimeric partners</note>
    </ligand>
</feature>
<feature type="binding site" evidence="1">
    <location>
        <position position="99"/>
    </location>
    <ligand>
        <name>5-phospho-alpha-D-ribose 1-diphosphate</name>
        <dbReference type="ChEBI" id="CHEBI:58017"/>
        <note>ligand shared between dimeric partners</note>
    </ligand>
</feature>
<feature type="binding site" description="in other chain" evidence="1">
    <location>
        <position position="100"/>
    </location>
    <ligand>
        <name>5-phospho-alpha-D-ribose 1-diphosphate</name>
        <dbReference type="ChEBI" id="CHEBI:58017"/>
        <note>ligand shared between dimeric partners</note>
    </ligand>
</feature>
<feature type="binding site" evidence="1">
    <location>
        <position position="103"/>
    </location>
    <ligand>
        <name>5-phospho-alpha-D-ribose 1-diphosphate</name>
        <dbReference type="ChEBI" id="CHEBI:58017"/>
        <note>ligand shared between dimeric partners</note>
    </ligand>
</feature>
<feature type="binding site" evidence="1">
    <location>
        <position position="105"/>
    </location>
    <ligand>
        <name>5-phospho-alpha-D-ribose 1-diphosphate</name>
        <dbReference type="ChEBI" id="CHEBI:58017"/>
        <note>ligand shared between dimeric partners</note>
    </ligand>
</feature>
<feature type="binding site" description="in other chain" evidence="1">
    <location>
        <begin position="124"/>
        <end position="132"/>
    </location>
    <ligand>
        <name>5-phospho-alpha-D-ribose 1-diphosphate</name>
        <dbReference type="ChEBI" id="CHEBI:58017"/>
        <note>ligand shared between dimeric partners</note>
    </ligand>
</feature>
<feature type="binding site" evidence="1">
    <location>
        <position position="128"/>
    </location>
    <ligand>
        <name>orotate</name>
        <dbReference type="ChEBI" id="CHEBI:30839"/>
    </ligand>
</feature>
<feature type="binding site" evidence="1">
    <location>
        <position position="156"/>
    </location>
    <ligand>
        <name>orotate</name>
        <dbReference type="ChEBI" id="CHEBI:30839"/>
    </ligand>
</feature>
<evidence type="ECO:0000255" key="1">
    <source>
        <dbReference type="HAMAP-Rule" id="MF_01208"/>
    </source>
</evidence>
<keyword id="KW-0328">Glycosyltransferase</keyword>
<keyword id="KW-0460">Magnesium</keyword>
<keyword id="KW-0665">Pyrimidine biosynthesis</keyword>
<keyword id="KW-0808">Transferase</keyword>
<sequence>MKAYQREFIEFALNKQVLKFGEFTLKSGRISPYFFNAGLFNTGLDLAKLGRFYAAALMDCGVEFDLLFGPAYKGIPIATTTAVALAEHHERDVPYCFNRKEAKTHGEGGNLVGSPLQGRVMLVDDVITAGTAIRESMEIINAQGATLAGVMISLDRQERGRGEISAIQEVERDYHCKVIAIVTLNDVIRYLEDKPEMAEHLVAVRQYREQYGVTL</sequence>
<comment type="function">
    <text evidence="1">Catalyzes the transfer of a ribosyl phosphate group from 5-phosphoribose 1-diphosphate to orotate, leading to the formation of orotidine monophosphate (OMP).</text>
</comment>
<comment type="catalytic activity">
    <reaction evidence="1">
        <text>orotidine 5'-phosphate + diphosphate = orotate + 5-phospho-alpha-D-ribose 1-diphosphate</text>
        <dbReference type="Rhea" id="RHEA:10380"/>
        <dbReference type="ChEBI" id="CHEBI:30839"/>
        <dbReference type="ChEBI" id="CHEBI:33019"/>
        <dbReference type="ChEBI" id="CHEBI:57538"/>
        <dbReference type="ChEBI" id="CHEBI:58017"/>
        <dbReference type="EC" id="2.4.2.10"/>
    </reaction>
</comment>
<comment type="cofactor">
    <cofactor evidence="1">
        <name>Mg(2+)</name>
        <dbReference type="ChEBI" id="CHEBI:18420"/>
    </cofactor>
</comment>
<comment type="pathway">
    <text evidence="1">Pyrimidine metabolism; UMP biosynthesis via de novo pathway; UMP from orotate: step 1/2.</text>
</comment>
<comment type="subunit">
    <text evidence="1">Homodimer.</text>
</comment>
<comment type="similarity">
    <text evidence="1">Belongs to the purine/pyrimidine phosphoribosyltransferase family. PyrE subfamily.</text>
</comment>
<dbReference type="EC" id="2.4.2.10" evidence="1"/>
<dbReference type="EMBL" id="CP001048">
    <property type="protein sequence ID" value="ACC87043.1"/>
    <property type="molecule type" value="Genomic_DNA"/>
</dbReference>
<dbReference type="RefSeq" id="WP_002208996.1">
    <property type="nucleotide sequence ID" value="NZ_CP009780.1"/>
</dbReference>
<dbReference type="SMR" id="B2JYM9"/>
<dbReference type="GeneID" id="57974545"/>
<dbReference type="KEGG" id="ypb:YPTS_0044"/>
<dbReference type="PATRIC" id="fig|502801.10.peg.3720"/>
<dbReference type="UniPathway" id="UPA00070">
    <property type="reaction ID" value="UER00119"/>
</dbReference>
<dbReference type="GO" id="GO:0005737">
    <property type="term" value="C:cytoplasm"/>
    <property type="evidence" value="ECO:0007669"/>
    <property type="project" value="TreeGrafter"/>
</dbReference>
<dbReference type="GO" id="GO:0000287">
    <property type="term" value="F:magnesium ion binding"/>
    <property type="evidence" value="ECO:0007669"/>
    <property type="project" value="UniProtKB-UniRule"/>
</dbReference>
<dbReference type="GO" id="GO:0004588">
    <property type="term" value="F:orotate phosphoribosyltransferase activity"/>
    <property type="evidence" value="ECO:0007669"/>
    <property type="project" value="UniProtKB-UniRule"/>
</dbReference>
<dbReference type="GO" id="GO:0006207">
    <property type="term" value="P:'de novo' pyrimidine nucleobase biosynthetic process"/>
    <property type="evidence" value="ECO:0007669"/>
    <property type="project" value="TreeGrafter"/>
</dbReference>
<dbReference type="GO" id="GO:0044205">
    <property type="term" value="P:'de novo' UMP biosynthetic process"/>
    <property type="evidence" value="ECO:0007669"/>
    <property type="project" value="UniProtKB-UniRule"/>
</dbReference>
<dbReference type="GO" id="GO:0046132">
    <property type="term" value="P:pyrimidine ribonucleoside biosynthetic process"/>
    <property type="evidence" value="ECO:0007669"/>
    <property type="project" value="TreeGrafter"/>
</dbReference>
<dbReference type="CDD" id="cd06223">
    <property type="entry name" value="PRTases_typeI"/>
    <property type="match status" value="1"/>
</dbReference>
<dbReference type="FunFam" id="3.40.50.2020:FF:000008">
    <property type="entry name" value="Orotate phosphoribosyltransferase"/>
    <property type="match status" value="1"/>
</dbReference>
<dbReference type="Gene3D" id="3.40.50.2020">
    <property type="match status" value="1"/>
</dbReference>
<dbReference type="HAMAP" id="MF_01208">
    <property type="entry name" value="PyrE"/>
    <property type="match status" value="1"/>
</dbReference>
<dbReference type="InterPro" id="IPR023031">
    <property type="entry name" value="OPRT"/>
</dbReference>
<dbReference type="InterPro" id="IPR004467">
    <property type="entry name" value="Or_phspho_trans_dom"/>
</dbReference>
<dbReference type="InterPro" id="IPR000836">
    <property type="entry name" value="PRibTrfase_dom"/>
</dbReference>
<dbReference type="InterPro" id="IPR029057">
    <property type="entry name" value="PRTase-like"/>
</dbReference>
<dbReference type="NCBIfam" id="TIGR00336">
    <property type="entry name" value="pyrE"/>
    <property type="match status" value="1"/>
</dbReference>
<dbReference type="PANTHER" id="PTHR46683">
    <property type="entry name" value="OROTATE PHOSPHORIBOSYLTRANSFERASE 1-RELATED"/>
    <property type="match status" value="1"/>
</dbReference>
<dbReference type="PANTHER" id="PTHR46683:SF1">
    <property type="entry name" value="OROTATE PHOSPHORIBOSYLTRANSFERASE 1-RELATED"/>
    <property type="match status" value="1"/>
</dbReference>
<dbReference type="Pfam" id="PF00156">
    <property type="entry name" value="Pribosyltran"/>
    <property type="match status" value="1"/>
</dbReference>
<dbReference type="SUPFAM" id="SSF53271">
    <property type="entry name" value="PRTase-like"/>
    <property type="match status" value="1"/>
</dbReference>
<dbReference type="PROSITE" id="PS00103">
    <property type="entry name" value="PUR_PYR_PR_TRANSFER"/>
    <property type="match status" value="1"/>
</dbReference>
<gene>
    <name evidence="1" type="primary">pyrE</name>
    <name type="ordered locus">YPTS_0044</name>
</gene>